<gene>
    <name evidence="1" type="primary">rpmI</name>
    <name type="ordered locus">BCAN_A2163</name>
</gene>
<feature type="chain" id="PRO_1000081597" description="Large ribosomal subunit protein bL35">
    <location>
        <begin position="1"/>
        <end position="66"/>
    </location>
</feature>
<dbReference type="EMBL" id="CP000872">
    <property type="protein sequence ID" value="ABX63146.1"/>
    <property type="molecule type" value="Genomic_DNA"/>
</dbReference>
<dbReference type="RefSeq" id="WP_006133018.1">
    <property type="nucleotide sequence ID" value="NC_010103.1"/>
</dbReference>
<dbReference type="SMR" id="A9M9V1"/>
<dbReference type="GeneID" id="55591685"/>
<dbReference type="KEGG" id="bcs:BCAN_A2163"/>
<dbReference type="HOGENOM" id="CLU_169643_2_1_5"/>
<dbReference type="Proteomes" id="UP000001385">
    <property type="component" value="Chromosome I"/>
</dbReference>
<dbReference type="GO" id="GO:0022625">
    <property type="term" value="C:cytosolic large ribosomal subunit"/>
    <property type="evidence" value="ECO:0007669"/>
    <property type="project" value="TreeGrafter"/>
</dbReference>
<dbReference type="GO" id="GO:0003735">
    <property type="term" value="F:structural constituent of ribosome"/>
    <property type="evidence" value="ECO:0007669"/>
    <property type="project" value="InterPro"/>
</dbReference>
<dbReference type="GO" id="GO:0006412">
    <property type="term" value="P:translation"/>
    <property type="evidence" value="ECO:0007669"/>
    <property type="project" value="UniProtKB-UniRule"/>
</dbReference>
<dbReference type="FunFam" id="4.10.410.60:FF:000001">
    <property type="entry name" value="50S ribosomal protein L35"/>
    <property type="match status" value="1"/>
</dbReference>
<dbReference type="Gene3D" id="4.10.410.60">
    <property type="match status" value="1"/>
</dbReference>
<dbReference type="HAMAP" id="MF_00514">
    <property type="entry name" value="Ribosomal_bL35"/>
    <property type="match status" value="1"/>
</dbReference>
<dbReference type="InterPro" id="IPR001706">
    <property type="entry name" value="Ribosomal_bL35"/>
</dbReference>
<dbReference type="InterPro" id="IPR021137">
    <property type="entry name" value="Ribosomal_bL35-like"/>
</dbReference>
<dbReference type="InterPro" id="IPR018265">
    <property type="entry name" value="Ribosomal_bL35_CS"/>
</dbReference>
<dbReference type="InterPro" id="IPR037229">
    <property type="entry name" value="Ribosomal_bL35_sf"/>
</dbReference>
<dbReference type="NCBIfam" id="TIGR00001">
    <property type="entry name" value="rpmI_bact"/>
    <property type="match status" value="1"/>
</dbReference>
<dbReference type="PANTHER" id="PTHR33343">
    <property type="entry name" value="54S RIBOSOMAL PROTEIN BL35M"/>
    <property type="match status" value="1"/>
</dbReference>
<dbReference type="PANTHER" id="PTHR33343:SF1">
    <property type="entry name" value="LARGE RIBOSOMAL SUBUNIT PROTEIN BL35M"/>
    <property type="match status" value="1"/>
</dbReference>
<dbReference type="Pfam" id="PF01632">
    <property type="entry name" value="Ribosomal_L35p"/>
    <property type="match status" value="1"/>
</dbReference>
<dbReference type="PRINTS" id="PR00064">
    <property type="entry name" value="RIBOSOMALL35"/>
</dbReference>
<dbReference type="SUPFAM" id="SSF143034">
    <property type="entry name" value="L35p-like"/>
    <property type="match status" value="1"/>
</dbReference>
<dbReference type="PROSITE" id="PS00936">
    <property type="entry name" value="RIBOSOMAL_L35"/>
    <property type="match status" value="1"/>
</dbReference>
<reference key="1">
    <citation type="submission" date="2007-10" db="EMBL/GenBank/DDBJ databases">
        <title>Brucella canis ATCC 23365 whole genome shotgun sequencing project.</title>
        <authorList>
            <person name="Setubal J.C."/>
            <person name="Bowns C."/>
            <person name="Boyle S."/>
            <person name="Crasta O.R."/>
            <person name="Czar M.J."/>
            <person name="Dharmanolla C."/>
            <person name="Gillespie J.J."/>
            <person name="Kenyon R.W."/>
            <person name="Lu J."/>
            <person name="Mane S."/>
            <person name="Mohapatra S."/>
            <person name="Nagrani S."/>
            <person name="Purkayastha A."/>
            <person name="Rajasimha H.K."/>
            <person name="Shallom J.M."/>
            <person name="Shallom S."/>
            <person name="Shukla M."/>
            <person name="Snyder E.E."/>
            <person name="Sobral B.W."/>
            <person name="Wattam A.R."/>
            <person name="Will R."/>
            <person name="Williams K."/>
            <person name="Yoo H."/>
            <person name="Bruce D."/>
            <person name="Detter C."/>
            <person name="Munk C."/>
            <person name="Brettin T.S."/>
        </authorList>
    </citation>
    <scope>NUCLEOTIDE SEQUENCE [LARGE SCALE GENOMIC DNA]</scope>
    <source>
        <strain>ATCC 23365 / NCTC 10854 / RM-666</strain>
    </source>
</reference>
<protein>
    <recommendedName>
        <fullName evidence="1">Large ribosomal subunit protein bL35</fullName>
    </recommendedName>
    <alternativeName>
        <fullName evidence="2">50S ribosomal protein L35</fullName>
    </alternativeName>
</protein>
<evidence type="ECO:0000255" key="1">
    <source>
        <dbReference type="HAMAP-Rule" id="MF_00514"/>
    </source>
</evidence>
<evidence type="ECO:0000305" key="2"/>
<accession>A9M9V1</accession>
<sequence>MPKMKTKTAAKKRFKITGTGKVKAAAAGKRHGMIKRSNKFIRDARGTMVLADADAKIVKQFLPNGL</sequence>
<keyword id="KW-1185">Reference proteome</keyword>
<keyword id="KW-0687">Ribonucleoprotein</keyword>
<keyword id="KW-0689">Ribosomal protein</keyword>
<organism>
    <name type="scientific">Brucella canis (strain ATCC 23365 / NCTC 10854 / RM-666)</name>
    <dbReference type="NCBI Taxonomy" id="483179"/>
    <lineage>
        <taxon>Bacteria</taxon>
        <taxon>Pseudomonadati</taxon>
        <taxon>Pseudomonadota</taxon>
        <taxon>Alphaproteobacteria</taxon>
        <taxon>Hyphomicrobiales</taxon>
        <taxon>Brucellaceae</taxon>
        <taxon>Brucella/Ochrobactrum group</taxon>
        <taxon>Brucella</taxon>
    </lineage>
</organism>
<comment type="similarity">
    <text evidence="1">Belongs to the bacterial ribosomal protein bL35 family.</text>
</comment>
<name>RL35_BRUC2</name>
<proteinExistence type="inferred from homology"/>